<accession>O14033</accession>
<reference key="1">
    <citation type="journal article" date="2002" name="Nature">
        <title>The genome sequence of Schizosaccharomyces pombe.</title>
        <authorList>
            <person name="Wood V."/>
            <person name="Gwilliam R."/>
            <person name="Rajandream M.A."/>
            <person name="Lyne M.H."/>
            <person name="Lyne R."/>
            <person name="Stewart A."/>
            <person name="Sgouros J.G."/>
            <person name="Peat N."/>
            <person name="Hayles J."/>
            <person name="Baker S.G."/>
            <person name="Basham D."/>
            <person name="Bowman S."/>
            <person name="Brooks K."/>
            <person name="Brown D."/>
            <person name="Brown S."/>
            <person name="Chillingworth T."/>
            <person name="Churcher C.M."/>
            <person name="Collins M."/>
            <person name="Connor R."/>
            <person name="Cronin A."/>
            <person name="Davis P."/>
            <person name="Feltwell T."/>
            <person name="Fraser A."/>
            <person name="Gentles S."/>
            <person name="Goble A."/>
            <person name="Hamlin N."/>
            <person name="Harris D.E."/>
            <person name="Hidalgo J."/>
            <person name="Hodgson G."/>
            <person name="Holroyd S."/>
            <person name="Hornsby T."/>
            <person name="Howarth S."/>
            <person name="Huckle E.J."/>
            <person name="Hunt S."/>
            <person name="Jagels K."/>
            <person name="James K.D."/>
            <person name="Jones L."/>
            <person name="Jones M."/>
            <person name="Leather S."/>
            <person name="McDonald S."/>
            <person name="McLean J."/>
            <person name="Mooney P."/>
            <person name="Moule S."/>
            <person name="Mungall K.L."/>
            <person name="Murphy L.D."/>
            <person name="Niblett D."/>
            <person name="Odell C."/>
            <person name="Oliver K."/>
            <person name="O'Neil S."/>
            <person name="Pearson D."/>
            <person name="Quail M.A."/>
            <person name="Rabbinowitsch E."/>
            <person name="Rutherford K.M."/>
            <person name="Rutter S."/>
            <person name="Saunders D."/>
            <person name="Seeger K."/>
            <person name="Sharp S."/>
            <person name="Skelton J."/>
            <person name="Simmonds M.N."/>
            <person name="Squares R."/>
            <person name="Squares S."/>
            <person name="Stevens K."/>
            <person name="Taylor K."/>
            <person name="Taylor R.G."/>
            <person name="Tivey A."/>
            <person name="Walsh S.V."/>
            <person name="Warren T."/>
            <person name="Whitehead S."/>
            <person name="Woodward J.R."/>
            <person name="Volckaert G."/>
            <person name="Aert R."/>
            <person name="Robben J."/>
            <person name="Grymonprez B."/>
            <person name="Weltjens I."/>
            <person name="Vanstreels E."/>
            <person name="Rieger M."/>
            <person name="Schaefer M."/>
            <person name="Mueller-Auer S."/>
            <person name="Gabel C."/>
            <person name="Fuchs M."/>
            <person name="Duesterhoeft A."/>
            <person name="Fritzc C."/>
            <person name="Holzer E."/>
            <person name="Moestl D."/>
            <person name="Hilbert H."/>
            <person name="Borzym K."/>
            <person name="Langer I."/>
            <person name="Beck A."/>
            <person name="Lehrach H."/>
            <person name="Reinhardt R."/>
            <person name="Pohl T.M."/>
            <person name="Eger P."/>
            <person name="Zimmermann W."/>
            <person name="Wedler H."/>
            <person name="Wambutt R."/>
            <person name="Purnelle B."/>
            <person name="Goffeau A."/>
            <person name="Cadieu E."/>
            <person name="Dreano S."/>
            <person name="Gloux S."/>
            <person name="Lelaure V."/>
            <person name="Mottier S."/>
            <person name="Galibert F."/>
            <person name="Aves S.J."/>
            <person name="Xiang Z."/>
            <person name="Hunt C."/>
            <person name="Moore K."/>
            <person name="Hurst S.M."/>
            <person name="Lucas M."/>
            <person name="Rochet M."/>
            <person name="Gaillardin C."/>
            <person name="Tallada V.A."/>
            <person name="Garzon A."/>
            <person name="Thode G."/>
            <person name="Daga R.R."/>
            <person name="Cruzado L."/>
            <person name="Jimenez J."/>
            <person name="Sanchez M."/>
            <person name="del Rey F."/>
            <person name="Benito J."/>
            <person name="Dominguez A."/>
            <person name="Revuelta J.L."/>
            <person name="Moreno S."/>
            <person name="Armstrong J."/>
            <person name="Forsburg S.L."/>
            <person name="Cerutti L."/>
            <person name="Lowe T."/>
            <person name="McCombie W.R."/>
            <person name="Paulsen I."/>
            <person name="Potashkin J."/>
            <person name="Shpakovski G.V."/>
            <person name="Ussery D."/>
            <person name="Barrell B.G."/>
            <person name="Nurse P."/>
        </authorList>
    </citation>
    <scope>NUCLEOTIDE SEQUENCE [LARGE SCALE GENOMIC DNA]</scope>
    <source>
        <strain>972 / ATCC 24843</strain>
    </source>
</reference>
<reference key="2">
    <citation type="journal article" date="2006" name="Nat. Biotechnol.">
        <title>ORFeome cloning and global analysis of protein localization in the fission yeast Schizosaccharomyces pombe.</title>
        <authorList>
            <person name="Matsuyama A."/>
            <person name="Arai R."/>
            <person name="Yashiroda Y."/>
            <person name="Shirai A."/>
            <person name="Kamata A."/>
            <person name="Sekido S."/>
            <person name="Kobayashi Y."/>
            <person name="Hashimoto A."/>
            <person name="Hamamoto M."/>
            <person name="Hiraoka Y."/>
            <person name="Horinouchi S."/>
            <person name="Yoshida M."/>
        </authorList>
    </citation>
    <scope>SUBCELLULAR LOCATION [LARGE SCALE ANALYSIS]</scope>
</reference>
<protein>
    <recommendedName>
        <fullName>Uncharacterized protein C29B12.12</fullName>
    </recommendedName>
</protein>
<name>YEMC_SCHPO</name>
<organism>
    <name type="scientific">Schizosaccharomyces pombe (strain 972 / ATCC 24843)</name>
    <name type="common">Fission yeast</name>
    <dbReference type="NCBI Taxonomy" id="284812"/>
    <lineage>
        <taxon>Eukaryota</taxon>
        <taxon>Fungi</taxon>
        <taxon>Dikarya</taxon>
        <taxon>Ascomycota</taxon>
        <taxon>Taphrinomycotina</taxon>
        <taxon>Schizosaccharomycetes</taxon>
        <taxon>Schizosaccharomycetales</taxon>
        <taxon>Schizosaccharomycetaceae</taxon>
        <taxon>Schizosaccharomyces</taxon>
    </lineage>
</organism>
<keyword id="KW-0963">Cytoplasm</keyword>
<keyword id="KW-0479">Metal-binding</keyword>
<keyword id="KW-0539">Nucleus</keyword>
<keyword id="KW-1185">Reference proteome</keyword>
<keyword id="KW-0862">Zinc</keyword>
<keyword id="KW-0863">Zinc-finger</keyword>
<proteinExistence type="predicted"/>
<dbReference type="EMBL" id="CU329670">
    <property type="protein sequence ID" value="CAB16256.1"/>
    <property type="molecule type" value="Genomic_DNA"/>
</dbReference>
<dbReference type="PIR" id="T38499">
    <property type="entry name" value="T38499"/>
</dbReference>
<dbReference type="BioGRID" id="279166">
    <property type="interactions" value="2"/>
</dbReference>
<dbReference type="FunCoup" id="O14033">
    <property type="interactions" value="27"/>
</dbReference>
<dbReference type="STRING" id="284812.O14033"/>
<dbReference type="PaxDb" id="4896-SPAC29B12.12.1"/>
<dbReference type="EnsemblFungi" id="SPAC29B12.12.1">
    <property type="protein sequence ID" value="SPAC29B12.12.1:pep"/>
    <property type="gene ID" value="SPAC29B12.12"/>
</dbReference>
<dbReference type="KEGG" id="spo:2542713"/>
<dbReference type="PomBase" id="SPAC29B12.12"/>
<dbReference type="VEuPathDB" id="FungiDB:SPAC29B12.12"/>
<dbReference type="eggNOG" id="KOG1940">
    <property type="taxonomic scope" value="Eukaryota"/>
</dbReference>
<dbReference type="HOGENOM" id="CLU_143932_0_0_1"/>
<dbReference type="InParanoid" id="O14033"/>
<dbReference type="OMA" id="ETRCAHY"/>
<dbReference type="PhylomeDB" id="O14033"/>
<dbReference type="PRO" id="PR:O14033"/>
<dbReference type="Proteomes" id="UP000002485">
    <property type="component" value="Chromosome I"/>
</dbReference>
<dbReference type="GO" id="GO:0005758">
    <property type="term" value="C:mitochondrial intermembrane space"/>
    <property type="evidence" value="ECO:0000318"/>
    <property type="project" value="GO_Central"/>
</dbReference>
<dbReference type="GO" id="GO:0005634">
    <property type="term" value="C:nucleus"/>
    <property type="evidence" value="ECO:0007669"/>
    <property type="project" value="UniProtKB-SubCell"/>
</dbReference>
<dbReference type="GO" id="GO:0030695">
    <property type="term" value="F:GTPase regulator activity"/>
    <property type="evidence" value="ECO:0007669"/>
    <property type="project" value="UniProtKB-ARBA"/>
</dbReference>
<dbReference type="GO" id="GO:0008270">
    <property type="term" value="F:zinc ion binding"/>
    <property type="evidence" value="ECO:0000318"/>
    <property type="project" value="GO_Central"/>
</dbReference>
<dbReference type="GO" id="GO:0045041">
    <property type="term" value="P:protein import into mitochondrial intermembrane space"/>
    <property type="evidence" value="ECO:0000318"/>
    <property type="project" value="GO_Central"/>
</dbReference>
<dbReference type="InterPro" id="IPR052604">
    <property type="entry name" value="Mito_Tim_assembly_helper"/>
</dbReference>
<dbReference type="InterPro" id="IPR016694">
    <property type="entry name" value="UCP017292"/>
</dbReference>
<dbReference type="InterPro" id="IPR008913">
    <property type="entry name" value="Znf_CHY"/>
</dbReference>
<dbReference type="InterPro" id="IPR037274">
    <property type="entry name" value="Znf_CHY_sf"/>
</dbReference>
<dbReference type="InterPro" id="IPR001781">
    <property type="entry name" value="Znf_LIM"/>
</dbReference>
<dbReference type="PANTHER" id="PTHR28082:SF1">
    <property type="entry name" value="HELPER OF TIM PROTEIN 13"/>
    <property type="match status" value="1"/>
</dbReference>
<dbReference type="PANTHER" id="PTHR28082">
    <property type="entry name" value="ZINC FINGER PROTEIN"/>
    <property type="match status" value="1"/>
</dbReference>
<dbReference type="Pfam" id="PF05495">
    <property type="entry name" value="zf-CHY"/>
    <property type="match status" value="1"/>
</dbReference>
<dbReference type="PIRSF" id="PIRSF017292">
    <property type="entry name" value="UCP017292_Znf_CHY"/>
    <property type="match status" value="1"/>
</dbReference>
<dbReference type="SUPFAM" id="SSF161219">
    <property type="entry name" value="CHY zinc finger-like"/>
    <property type="match status" value="1"/>
</dbReference>
<dbReference type="PROSITE" id="PS51266">
    <property type="entry name" value="ZF_CHY"/>
    <property type="match status" value="1"/>
</dbReference>
<sequence>MQTPTARSSTNVYGKLVDNETRCFHYHSKADVVALRCGQCEKFYACFQCHDELNTHPFLPWRKAKFHIPCVICGACKNSLTVEEYRSTVHCKYCNHPFNPKCKNHAGYYFEDA</sequence>
<comment type="subcellular location">
    <subcellularLocation>
        <location evidence="2">Cytoplasm</location>
    </subcellularLocation>
    <subcellularLocation>
        <location evidence="2">Nucleus</location>
    </subcellularLocation>
</comment>
<gene>
    <name type="ORF">SPAC29B12.12</name>
</gene>
<evidence type="ECO:0000255" key="1">
    <source>
        <dbReference type="PROSITE-ProRule" id="PRU00601"/>
    </source>
</evidence>
<evidence type="ECO:0000269" key="2">
    <source>
    </source>
</evidence>
<feature type="chain" id="PRO_0000310737" description="Uncharacterized protein C29B12.12">
    <location>
        <begin position="1"/>
        <end position="113"/>
    </location>
</feature>
<feature type="zinc finger region" description="CHY-type; degenerate" evidence="1">
    <location>
        <begin position="16"/>
        <end position="96"/>
    </location>
</feature>
<feature type="binding site" evidence="1">
    <location>
        <position position="23"/>
    </location>
    <ligand>
        <name>Zn(2+)</name>
        <dbReference type="ChEBI" id="CHEBI:29105"/>
        <label>1</label>
    </ligand>
</feature>
<feature type="binding site" evidence="1">
    <location>
        <position position="25"/>
    </location>
    <ligand>
        <name>Zn(2+)</name>
        <dbReference type="ChEBI" id="CHEBI:29105"/>
        <label>1</label>
    </ligand>
</feature>
<feature type="binding site" evidence="1">
    <location>
        <position position="46"/>
    </location>
    <ligand>
        <name>Zn(2+)</name>
        <dbReference type="ChEBI" id="CHEBI:29105"/>
        <label>1</label>
    </ligand>
</feature>
<feature type="binding site" evidence="1">
    <location>
        <position position="49"/>
    </location>
    <ligand>
        <name>Zn(2+)</name>
        <dbReference type="ChEBI" id="CHEBI:29105"/>
        <label>1</label>
    </ligand>
</feature>
<feature type="binding site" evidence="1">
    <location>
        <position position="73"/>
    </location>
    <ligand>
        <name>Zn(2+)</name>
        <dbReference type="ChEBI" id="CHEBI:29105"/>
        <label>2</label>
    </ligand>
</feature>
<feature type="binding site" evidence="1">
    <location>
        <position position="76"/>
    </location>
    <ligand>
        <name>Zn(2+)</name>
        <dbReference type="ChEBI" id="CHEBI:29105"/>
        <label>2</label>
    </ligand>
</feature>
<feature type="binding site" evidence="1">
    <location>
        <position position="91"/>
    </location>
    <ligand>
        <name>Zn(2+)</name>
        <dbReference type="ChEBI" id="CHEBI:29105"/>
        <label>2</label>
    </ligand>
</feature>
<feature type="binding site" evidence="1">
    <location>
        <position position="94"/>
    </location>
    <ligand>
        <name>Zn(2+)</name>
        <dbReference type="ChEBI" id="CHEBI:29105"/>
        <label>2</label>
    </ligand>
</feature>